<sequence length="474" mass="53760">MSKKLHIKTWGCQMNEYDSSKMADLLGEYQGYTLTEEAEEADILLLNTCSIREKAQEKVFHQLGRWKTLKDKNPDLIIGVGGCVASQEGKAIKDRAQCVDIIFGPQTLHRLPEMIEQVRRGEKAVIDVSFPEIEKFDRLPEPRAEGPTAFVSIMEGCSKYCSFCVVPYTRGEEVSRPSDDIILEIAQLAEQGVREVNLLGQNVNAYRGATHDGGICTFAELLRYVAAIDGIDRIRFTTSHPIEFTQDIIDVYEDTPELVSFLHLPVQSGSDRILTAMKRGHMAIEYKSIIRRLRKARPDIQISSDFIIGFPGETQEDFADTMKLIEDVAFDHSFSFIYSARPGTPAADLPDDVDMEEKKQRLAILQDRITQQAMRYSRHMMGTVQRILVEGPSVKNPMELRGRTENNRVVNFEGLPKHIGTFVDVEIVDVYTNSLRGKFIRGEDEMDLRRNLRPSDILAKHKQDDDLGVTQFKP</sequence>
<comment type="function">
    <text evidence="1">Catalyzes the methylthiolation of N6-(dimethylallyl)adenosine (i(6)A), leading to the formation of 2-methylthio-N6-(dimethylallyl)adenosine (ms(2)i(6)A) at position 37 in tRNAs that read codons beginning with uridine.</text>
</comment>
<comment type="catalytic activity">
    <reaction evidence="1">
        <text>N(6)-dimethylallyladenosine(37) in tRNA + (sulfur carrier)-SH + AH2 + 2 S-adenosyl-L-methionine = 2-methylsulfanyl-N(6)-dimethylallyladenosine(37) in tRNA + (sulfur carrier)-H + 5'-deoxyadenosine + L-methionine + A + S-adenosyl-L-homocysteine + 2 H(+)</text>
        <dbReference type="Rhea" id="RHEA:37067"/>
        <dbReference type="Rhea" id="RHEA-COMP:10375"/>
        <dbReference type="Rhea" id="RHEA-COMP:10376"/>
        <dbReference type="Rhea" id="RHEA-COMP:14737"/>
        <dbReference type="Rhea" id="RHEA-COMP:14739"/>
        <dbReference type="ChEBI" id="CHEBI:13193"/>
        <dbReference type="ChEBI" id="CHEBI:15378"/>
        <dbReference type="ChEBI" id="CHEBI:17319"/>
        <dbReference type="ChEBI" id="CHEBI:17499"/>
        <dbReference type="ChEBI" id="CHEBI:29917"/>
        <dbReference type="ChEBI" id="CHEBI:57844"/>
        <dbReference type="ChEBI" id="CHEBI:57856"/>
        <dbReference type="ChEBI" id="CHEBI:59789"/>
        <dbReference type="ChEBI" id="CHEBI:64428"/>
        <dbReference type="ChEBI" id="CHEBI:74415"/>
        <dbReference type="ChEBI" id="CHEBI:74417"/>
        <dbReference type="EC" id="2.8.4.3"/>
    </reaction>
</comment>
<comment type="cofactor">
    <cofactor evidence="1">
        <name>[4Fe-4S] cluster</name>
        <dbReference type="ChEBI" id="CHEBI:49883"/>
    </cofactor>
    <text evidence="1">Binds 2 [4Fe-4S] clusters. One cluster is coordinated with 3 cysteines and an exchangeable S-adenosyl-L-methionine.</text>
</comment>
<comment type="subunit">
    <text evidence="1">Monomer.</text>
</comment>
<comment type="subcellular location">
    <subcellularLocation>
        <location evidence="1">Cytoplasm</location>
    </subcellularLocation>
</comment>
<comment type="similarity">
    <text evidence="1">Belongs to the methylthiotransferase family. MiaB subfamily.</text>
</comment>
<gene>
    <name evidence="1" type="primary">miaB</name>
    <name type="ordered locus">SO_1181</name>
</gene>
<accession>Q8CX45</accession>
<evidence type="ECO:0000255" key="1">
    <source>
        <dbReference type="HAMAP-Rule" id="MF_01864"/>
    </source>
</evidence>
<evidence type="ECO:0000255" key="2">
    <source>
        <dbReference type="PROSITE-ProRule" id="PRU01266"/>
    </source>
</evidence>
<name>MIAB_SHEON</name>
<dbReference type="EC" id="2.8.4.3" evidence="1"/>
<dbReference type="EMBL" id="AE014299">
    <property type="protein sequence ID" value="AAN54251.1"/>
    <property type="molecule type" value="Genomic_DNA"/>
</dbReference>
<dbReference type="RefSeq" id="NP_716806.1">
    <property type="nucleotide sequence ID" value="NC_004347.2"/>
</dbReference>
<dbReference type="RefSeq" id="WP_011071412.1">
    <property type="nucleotide sequence ID" value="NC_004347.2"/>
</dbReference>
<dbReference type="SMR" id="Q8CX45"/>
<dbReference type="STRING" id="211586.SO_1181"/>
<dbReference type="PaxDb" id="211586-SO_1181"/>
<dbReference type="KEGG" id="son:SO_1181"/>
<dbReference type="PATRIC" id="fig|211586.12.peg.1133"/>
<dbReference type="eggNOG" id="COG0621">
    <property type="taxonomic scope" value="Bacteria"/>
</dbReference>
<dbReference type="HOGENOM" id="CLU_018697_2_0_6"/>
<dbReference type="OrthoDB" id="9805215at2"/>
<dbReference type="PhylomeDB" id="Q8CX45"/>
<dbReference type="BioCyc" id="SONE211586:G1GMP-1085-MONOMER"/>
<dbReference type="Proteomes" id="UP000008186">
    <property type="component" value="Chromosome"/>
</dbReference>
<dbReference type="GO" id="GO:0005829">
    <property type="term" value="C:cytosol"/>
    <property type="evidence" value="ECO:0000318"/>
    <property type="project" value="GO_Central"/>
</dbReference>
<dbReference type="GO" id="GO:0051539">
    <property type="term" value="F:4 iron, 4 sulfur cluster binding"/>
    <property type="evidence" value="ECO:0000318"/>
    <property type="project" value="GO_Central"/>
</dbReference>
<dbReference type="GO" id="GO:0046872">
    <property type="term" value="F:metal ion binding"/>
    <property type="evidence" value="ECO:0007669"/>
    <property type="project" value="UniProtKB-KW"/>
</dbReference>
<dbReference type="GO" id="GO:0035597">
    <property type="term" value="F:N6-isopentenyladenosine methylthiotransferase activity"/>
    <property type="evidence" value="ECO:0000318"/>
    <property type="project" value="GO_Central"/>
</dbReference>
<dbReference type="GO" id="GO:0035600">
    <property type="term" value="P:tRNA methylthiolation"/>
    <property type="evidence" value="ECO:0000318"/>
    <property type="project" value="GO_Central"/>
</dbReference>
<dbReference type="CDD" id="cd01335">
    <property type="entry name" value="Radical_SAM"/>
    <property type="match status" value="1"/>
</dbReference>
<dbReference type="FunFam" id="3.40.50.12160:FF:000001">
    <property type="entry name" value="tRNA-2-methylthio-N(6)-dimethylallyladenosine synthase"/>
    <property type="match status" value="1"/>
</dbReference>
<dbReference type="FunFam" id="3.80.30.20:FF:000001">
    <property type="entry name" value="tRNA-2-methylthio-N(6)-dimethylallyladenosine synthase 2"/>
    <property type="match status" value="1"/>
</dbReference>
<dbReference type="Gene3D" id="3.40.50.12160">
    <property type="entry name" value="Methylthiotransferase, N-terminal domain"/>
    <property type="match status" value="1"/>
</dbReference>
<dbReference type="Gene3D" id="3.80.30.20">
    <property type="entry name" value="tm_1862 like domain"/>
    <property type="match status" value="1"/>
</dbReference>
<dbReference type="HAMAP" id="MF_01864">
    <property type="entry name" value="tRNA_metthiotr_MiaB"/>
    <property type="match status" value="1"/>
</dbReference>
<dbReference type="InterPro" id="IPR006638">
    <property type="entry name" value="Elp3/MiaA/NifB-like_rSAM"/>
</dbReference>
<dbReference type="InterPro" id="IPR005839">
    <property type="entry name" value="Methylthiotransferase"/>
</dbReference>
<dbReference type="InterPro" id="IPR020612">
    <property type="entry name" value="Methylthiotransferase_CS"/>
</dbReference>
<dbReference type="InterPro" id="IPR013848">
    <property type="entry name" value="Methylthiotransferase_N"/>
</dbReference>
<dbReference type="InterPro" id="IPR038135">
    <property type="entry name" value="Methylthiotransferase_N_sf"/>
</dbReference>
<dbReference type="InterPro" id="IPR006463">
    <property type="entry name" value="MiaB_methiolase"/>
</dbReference>
<dbReference type="InterPro" id="IPR007197">
    <property type="entry name" value="rSAM"/>
</dbReference>
<dbReference type="InterPro" id="IPR023404">
    <property type="entry name" value="rSAM_horseshoe"/>
</dbReference>
<dbReference type="InterPro" id="IPR002792">
    <property type="entry name" value="TRAM_dom"/>
</dbReference>
<dbReference type="NCBIfam" id="TIGR01574">
    <property type="entry name" value="miaB-methiolase"/>
    <property type="match status" value="1"/>
</dbReference>
<dbReference type="NCBIfam" id="TIGR00089">
    <property type="entry name" value="MiaB/RimO family radical SAM methylthiotransferase"/>
    <property type="match status" value="1"/>
</dbReference>
<dbReference type="PANTHER" id="PTHR43020">
    <property type="entry name" value="CDK5 REGULATORY SUBUNIT-ASSOCIATED PROTEIN 1"/>
    <property type="match status" value="1"/>
</dbReference>
<dbReference type="PANTHER" id="PTHR43020:SF2">
    <property type="entry name" value="MITOCHONDRIAL TRNA METHYLTHIOTRANSFERASE CDK5RAP1"/>
    <property type="match status" value="1"/>
</dbReference>
<dbReference type="Pfam" id="PF04055">
    <property type="entry name" value="Radical_SAM"/>
    <property type="match status" value="1"/>
</dbReference>
<dbReference type="Pfam" id="PF01938">
    <property type="entry name" value="TRAM"/>
    <property type="match status" value="1"/>
</dbReference>
<dbReference type="Pfam" id="PF00919">
    <property type="entry name" value="UPF0004"/>
    <property type="match status" value="1"/>
</dbReference>
<dbReference type="SFLD" id="SFLDF00273">
    <property type="entry name" value="(dimethylallyl)adenosine_tRNA"/>
    <property type="match status" value="1"/>
</dbReference>
<dbReference type="SFLD" id="SFLDG01082">
    <property type="entry name" value="B12-binding_domain_containing"/>
    <property type="match status" value="1"/>
</dbReference>
<dbReference type="SFLD" id="SFLDG01061">
    <property type="entry name" value="methylthiotransferase"/>
    <property type="match status" value="1"/>
</dbReference>
<dbReference type="SMART" id="SM00729">
    <property type="entry name" value="Elp3"/>
    <property type="match status" value="1"/>
</dbReference>
<dbReference type="SUPFAM" id="SSF102114">
    <property type="entry name" value="Radical SAM enzymes"/>
    <property type="match status" value="1"/>
</dbReference>
<dbReference type="PROSITE" id="PS51449">
    <property type="entry name" value="MTTASE_N"/>
    <property type="match status" value="1"/>
</dbReference>
<dbReference type="PROSITE" id="PS01278">
    <property type="entry name" value="MTTASE_RADICAL"/>
    <property type="match status" value="1"/>
</dbReference>
<dbReference type="PROSITE" id="PS51918">
    <property type="entry name" value="RADICAL_SAM"/>
    <property type="match status" value="1"/>
</dbReference>
<dbReference type="PROSITE" id="PS50926">
    <property type="entry name" value="TRAM"/>
    <property type="match status" value="1"/>
</dbReference>
<organism>
    <name type="scientific">Shewanella oneidensis (strain ATCC 700550 / JCM 31522 / CIP 106686 / LMG 19005 / NCIMB 14063 / MR-1)</name>
    <dbReference type="NCBI Taxonomy" id="211586"/>
    <lineage>
        <taxon>Bacteria</taxon>
        <taxon>Pseudomonadati</taxon>
        <taxon>Pseudomonadota</taxon>
        <taxon>Gammaproteobacteria</taxon>
        <taxon>Alteromonadales</taxon>
        <taxon>Shewanellaceae</taxon>
        <taxon>Shewanella</taxon>
    </lineage>
</organism>
<proteinExistence type="inferred from homology"/>
<protein>
    <recommendedName>
        <fullName evidence="1">tRNA-2-methylthio-N(6)-dimethylallyladenosine synthase</fullName>
        <ecNumber evidence="1">2.8.4.3</ecNumber>
    </recommendedName>
    <alternativeName>
        <fullName evidence="1">(Dimethylallyl)adenosine tRNA methylthiotransferase MiaB</fullName>
    </alternativeName>
    <alternativeName>
        <fullName evidence="1">tRNA-i(6)A37 methylthiotransferase</fullName>
    </alternativeName>
</protein>
<feature type="chain" id="PRO_0000374541" description="tRNA-2-methylthio-N(6)-dimethylallyladenosine synthase">
    <location>
        <begin position="1"/>
        <end position="474"/>
    </location>
</feature>
<feature type="domain" description="MTTase N-terminal" evidence="1">
    <location>
        <begin position="3"/>
        <end position="120"/>
    </location>
</feature>
<feature type="domain" description="Radical SAM core" evidence="2">
    <location>
        <begin position="143"/>
        <end position="375"/>
    </location>
</feature>
<feature type="domain" description="TRAM" evidence="1">
    <location>
        <begin position="378"/>
        <end position="441"/>
    </location>
</feature>
<feature type="binding site" evidence="1">
    <location>
        <position position="12"/>
    </location>
    <ligand>
        <name>[4Fe-4S] cluster</name>
        <dbReference type="ChEBI" id="CHEBI:49883"/>
        <label>1</label>
    </ligand>
</feature>
<feature type="binding site" evidence="1">
    <location>
        <position position="49"/>
    </location>
    <ligand>
        <name>[4Fe-4S] cluster</name>
        <dbReference type="ChEBI" id="CHEBI:49883"/>
        <label>1</label>
    </ligand>
</feature>
<feature type="binding site" evidence="1">
    <location>
        <position position="83"/>
    </location>
    <ligand>
        <name>[4Fe-4S] cluster</name>
        <dbReference type="ChEBI" id="CHEBI:49883"/>
        <label>1</label>
    </ligand>
</feature>
<feature type="binding site" evidence="1">
    <location>
        <position position="157"/>
    </location>
    <ligand>
        <name>[4Fe-4S] cluster</name>
        <dbReference type="ChEBI" id="CHEBI:49883"/>
        <label>2</label>
        <note>4Fe-4S-S-AdoMet</note>
    </ligand>
</feature>
<feature type="binding site" evidence="1">
    <location>
        <position position="161"/>
    </location>
    <ligand>
        <name>[4Fe-4S] cluster</name>
        <dbReference type="ChEBI" id="CHEBI:49883"/>
        <label>2</label>
        <note>4Fe-4S-S-AdoMet</note>
    </ligand>
</feature>
<feature type="binding site" evidence="1">
    <location>
        <position position="164"/>
    </location>
    <ligand>
        <name>[4Fe-4S] cluster</name>
        <dbReference type="ChEBI" id="CHEBI:49883"/>
        <label>2</label>
        <note>4Fe-4S-S-AdoMet</note>
    </ligand>
</feature>
<reference key="1">
    <citation type="journal article" date="2002" name="Nat. Biotechnol.">
        <title>Genome sequence of the dissimilatory metal ion-reducing bacterium Shewanella oneidensis.</title>
        <authorList>
            <person name="Heidelberg J.F."/>
            <person name="Paulsen I.T."/>
            <person name="Nelson K.E."/>
            <person name="Gaidos E.J."/>
            <person name="Nelson W.C."/>
            <person name="Read T.D."/>
            <person name="Eisen J.A."/>
            <person name="Seshadri R."/>
            <person name="Ward N.L."/>
            <person name="Methe B.A."/>
            <person name="Clayton R.A."/>
            <person name="Meyer T."/>
            <person name="Tsapin A."/>
            <person name="Scott J."/>
            <person name="Beanan M.J."/>
            <person name="Brinkac L.M."/>
            <person name="Daugherty S.C."/>
            <person name="DeBoy R.T."/>
            <person name="Dodson R.J."/>
            <person name="Durkin A.S."/>
            <person name="Haft D.H."/>
            <person name="Kolonay J.F."/>
            <person name="Madupu R."/>
            <person name="Peterson J.D."/>
            <person name="Umayam L.A."/>
            <person name="White O."/>
            <person name="Wolf A.M."/>
            <person name="Vamathevan J.J."/>
            <person name="Weidman J.F."/>
            <person name="Impraim M."/>
            <person name="Lee K."/>
            <person name="Berry K.J."/>
            <person name="Lee C."/>
            <person name="Mueller J."/>
            <person name="Khouri H.M."/>
            <person name="Gill J."/>
            <person name="Utterback T.R."/>
            <person name="McDonald L.A."/>
            <person name="Feldblyum T.V."/>
            <person name="Smith H.O."/>
            <person name="Venter J.C."/>
            <person name="Nealson K.H."/>
            <person name="Fraser C.M."/>
        </authorList>
    </citation>
    <scope>NUCLEOTIDE SEQUENCE [LARGE SCALE GENOMIC DNA]</scope>
    <source>
        <strain>ATCC 700550 / JCM 31522 / CIP 106686 / LMG 19005 / NCIMB 14063 / MR-1</strain>
    </source>
</reference>
<keyword id="KW-0004">4Fe-4S</keyword>
<keyword id="KW-0963">Cytoplasm</keyword>
<keyword id="KW-0408">Iron</keyword>
<keyword id="KW-0411">Iron-sulfur</keyword>
<keyword id="KW-0479">Metal-binding</keyword>
<keyword id="KW-1185">Reference proteome</keyword>
<keyword id="KW-0949">S-adenosyl-L-methionine</keyword>
<keyword id="KW-0808">Transferase</keyword>
<keyword id="KW-0819">tRNA processing</keyword>